<proteinExistence type="inferred from homology"/>
<gene>
    <name evidence="1" type="primary">nuoB</name>
    <name type="ordered locus">SUN_2231</name>
</gene>
<sequence length="172" mass="19174">MAQHQVNYASAAGLPIALTSVDKLVNWGRSNSLWPLTYGLACCAIEMMASGASRYDFDRMGTIFRASPRQADVMILAGTLSKKHSEFARRLYDQMTEPKWVISMGSCANTGGMFNTYATVQGVDRIIPVDIYLPGCAPRPETLQYALMMLQKKIRRESANMNNNTKQNLRLV</sequence>
<comment type="function">
    <text evidence="1">NDH-1 shuttles electrons from NADH, via FMN and iron-sulfur (Fe-S) centers, to quinones in the respiratory chain. The immediate electron acceptor for the enzyme in this species is believed to be ubiquinone. Couples the redox reaction to proton translocation (for every two electrons transferred, four hydrogen ions are translocated across the cytoplasmic membrane), and thus conserves the redox energy in a proton gradient.</text>
</comment>
<comment type="catalytic activity">
    <reaction evidence="1">
        <text>a quinone + NADH + 5 H(+)(in) = a quinol + NAD(+) + 4 H(+)(out)</text>
        <dbReference type="Rhea" id="RHEA:57888"/>
        <dbReference type="ChEBI" id="CHEBI:15378"/>
        <dbReference type="ChEBI" id="CHEBI:24646"/>
        <dbReference type="ChEBI" id="CHEBI:57540"/>
        <dbReference type="ChEBI" id="CHEBI:57945"/>
        <dbReference type="ChEBI" id="CHEBI:132124"/>
    </reaction>
</comment>
<comment type="cofactor">
    <cofactor evidence="1">
        <name>[4Fe-4S] cluster</name>
        <dbReference type="ChEBI" id="CHEBI:49883"/>
    </cofactor>
    <text evidence="1">Binds 1 [4Fe-4S] cluster.</text>
</comment>
<comment type="subunit">
    <text evidence="1">NDH-1 is composed of 14 different subunits. Subunits NuoB, C, D, E, F, and G constitute the peripheral sector of the complex.</text>
</comment>
<comment type="subcellular location">
    <subcellularLocation>
        <location evidence="1">Cell inner membrane</location>
        <topology evidence="1">Peripheral membrane protein</topology>
        <orientation evidence="1">Cytoplasmic side</orientation>
    </subcellularLocation>
</comment>
<comment type="similarity">
    <text evidence="1">Belongs to the complex I 20 kDa subunit family.</text>
</comment>
<name>NUOB_SULNB</name>
<organism>
    <name type="scientific">Sulfurovum sp. (strain NBC37-1)</name>
    <dbReference type="NCBI Taxonomy" id="387093"/>
    <lineage>
        <taxon>Bacteria</taxon>
        <taxon>Pseudomonadati</taxon>
        <taxon>Campylobacterota</taxon>
        <taxon>Epsilonproteobacteria</taxon>
        <taxon>Campylobacterales</taxon>
        <taxon>Sulfurovaceae</taxon>
        <taxon>Sulfurovum</taxon>
    </lineage>
</organism>
<protein>
    <recommendedName>
        <fullName evidence="1">NADH-quinone oxidoreductase subunit B</fullName>
        <ecNumber evidence="1">7.1.1.-</ecNumber>
    </recommendedName>
    <alternativeName>
        <fullName evidence="1">NADH dehydrogenase I subunit B</fullName>
    </alternativeName>
    <alternativeName>
        <fullName evidence="1">NDH-1 subunit B</fullName>
    </alternativeName>
</protein>
<keyword id="KW-0004">4Fe-4S</keyword>
<keyword id="KW-0997">Cell inner membrane</keyword>
<keyword id="KW-1003">Cell membrane</keyword>
<keyword id="KW-0408">Iron</keyword>
<keyword id="KW-0411">Iron-sulfur</keyword>
<keyword id="KW-0472">Membrane</keyword>
<keyword id="KW-0479">Metal-binding</keyword>
<keyword id="KW-0520">NAD</keyword>
<keyword id="KW-0874">Quinone</keyword>
<keyword id="KW-1278">Translocase</keyword>
<keyword id="KW-0813">Transport</keyword>
<keyword id="KW-0830">Ubiquinone</keyword>
<dbReference type="EC" id="7.1.1.-" evidence="1"/>
<dbReference type="EMBL" id="AP009179">
    <property type="protein sequence ID" value="BAF73171.1"/>
    <property type="molecule type" value="Genomic_DNA"/>
</dbReference>
<dbReference type="RefSeq" id="WP_012084008.1">
    <property type="nucleotide sequence ID" value="NC_009663.1"/>
</dbReference>
<dbReference type="SMR" id="A6QCG2"/>
<dbReference type="STRING" id="387093.SUN_2231"/>
<dbReference type="KEGG" id="sun:SUN_2231"/>
<dbReference type="eggNOG" id="COG0377">
    <property type="taxonomic scope" value="Bacteria"/>
</dbReference>
<dbReference type="HOGENOM" id="CLU_055737_7_3_7"/>
<dbReference type="OrthoDB" id="9786737at2"/>
<dbReference type="Proteomes" id="UP000006378">
    <property type="component" value="Chromosome"/>
</dbReference>
<dbReference type="GO" id="GO:0005886">
    <property type="term" value="C:plasma membrane"/>
    <property type="evidence" value="ECO:0007669"/>
    <property type="project" value="UniProtKB-SubCell"/>
</dbReference>
<dbReference type="GO" id="GO:0045271">
    <property type="term" value="C:respiratory chain complex I"/>
    <property type="evidence" value="ECO:0007669"/>
    <property type="project" value="TreeGrafter"/>
</dbReference>
<dbReference type="GO" id="GO:0051539">
    <property type="term" value="F:4 iron, 4 sulfur cluster binding"/>
    <property type="evidence" value="ECO:0007669"/>
    <property type="project" value="UniProtKB-KW"/>
</dbReference>
<dbReference type="GO" id="GO:0005506">
    <property type="term" value="F:iron ion binding"/>
    <property type="evidence" value="ECO:0007669"/>
    <property type="project" value="UniProtKB-UniRule"/>
</dbReference>
<dbReference type="GO" id="GO:0008137">
    <property type="term" value="F:NADH dehydrogenase (ubiquinone) activity"/>
    <property type="evidence" value="ECO:0007669"/>
    <property type="project" value="InterPro"/>
</dbReference>
<dbReference type="GO" id="GO:0050136">
    <property type="term" value="F:NADH:ubiquinone reductase (non-electrogenic) activity"/>
    <property type="evidence" value="ECO:0007669"/>
    <property type="project" value="UniProtKB-UniRule"/>
</dbReference>
<dbReference type="GO" id="GO:0048038">
    <property type="term" value="F:quinone binding"/>
    <property type="evidence" value="ECO:0007669"/>
    <property type="project" value="UniProtKB-KW"/>
</dbReference>
<dbReference type="GO" id="GO:0009060">
    <property type="term" value="P:aerobic respiration"/>
    <property type="evidence" value="ECO:0007669"/>
    <property type="project" value="TreeGrafter"/>
</dbReference>
<dbReference type="GO" id="GO:0015990">
    <property type="term" value="P:electron transport coupled proton transport"/>
    <property type="evidence" value="ECO:0007669"/>
    <property type="project" value="TreeGrafter"/>
</dbReference>
<dbReference type="FunFam" id="3.40.50.12280:FF:000002">
    <property type="entry name" value="NADH-quinone oxidoreductase subunit B"/>
    <property type="match status" value="1"/>
</dbReference>
<dbReference type="Gene3D" id="3.40.50.12280">
    <property type="match status" value="1"/>
</dbReference>
<dbReference type="HAMAP" id="MF_01356">
    <property type="entry name" value="NDH1_NuoB"/>
    <property type="match status" value="1"/>
</dbReference>
<dbReference type="InterPro" id="IPR006137">
    <property type="entry name" value="NADH_UbQ_OxRdtase-like_20kDa"/>
</dbReference>
<dbReference type="InterPro" id="IPR006138">
    <property type="entry name" value="NADH_UQ_OxRdtase_20Kd_su"/>
</dbReference>
<dbReference type="NCBIfam" id="TIGR01957">
    <property type="entry name" value="nuoB_fam"/>
    <property type="match status" value="1"/>
</dbReference>
<dbReference type="NCBIfam" id="NF005012">
    <property type="entry name" value="PRK06411.1"/>
    <property type="match status" value="1"/>
</dbReference>
<dbReference type="PANTHER" id="PTHR11995">
    <property type="entry name" value="NADH DEHYDROGENASE"/>
    <property type="match status" value="1"/>
</dbReference>
<dbReference type="PANTHER" id="PTHR11995:SF14">
    <property type="entry name" value="NADH DEHYDROGENASE [UBIQUINONE] IRON-SULFUR PROTEIN 7, MITOCHONDRIAL"/>
    <property type="match status" value="1"/>
</dbReference>
<dbReference type="Pfam" id="PF01058">
    <property type="entry name" value="Oxidored_q6"/>
    <property type="match status" value="1"/>
</dbReference>
<dbReference type="SUPFAM" id="SSF56770">
    <property type="entry name" value="HydA/Nqo6-like"/>
    <property type="match status" value="1"/>
</dbReference>
<accession>A6QCG2</accession>
<feature type="chain" id="PRO_0000376393" description="NADH-quinone oxidoreductase subunit B">
    <location>
        <begin position="1"/>
        <end position="172"/>
    </location>
</feature>
<feature type="binding site" evidence="1">
    <location>
        <position position="42"/>
    </location>
    <ligand>
        <name>[4Fe-4S] cluster</name>
        <dbReference type="ChEBI" id="CHEBI:49883"/>
    </ligand>
</feature>
<feature type="binding site" evidence="1">
    <location>
        <position position="43"/>
    </location>
    <ligand>
        <name>[4Fe-4S] cluster</name>
        <dbReference type="ChEBI" id="CHEBI:49883"/>
    </ligand>
</feature>
<feature type="binding site" evidence="1">
    <location>
        <position position="107"/>
    </location>
    <ligand>
        <name>[4Fe-4S] cluster</name>
        <dbReference type="ChEBI" id="CHEBI:49883"/>
    </ligand>
</feature>
<feature type="binding site" evidence="1">
    <location>
        <position position="136"/>
    </location>
    <ligand>
        <name>[4Fe-4S] cluster</name>
        <dbReference type="ChEBI" id="CHEBI:49883"/>
    </ligand>
</feature>
<evidence type="ECO:0000255" key="1">
    <source>
        <dbReference type="HAMAP-Rule" id="MF_01356"/>
    </source>
</evidence>
<reference key="1">
    <citation type="journal article" date="2007" name="Proc. Natl. Acad. Sci. U.S.A.">
        <title>Deep-sea vent epsilon-proteobacterial genomes provide insights into emergence of pathogens.</title>
        <authorList>
            <person name="Nakagawa S."/>
            <person name="Takaki Y."/>
            <person name="Shimamura S."/>
            <person name="Reysenbach A.-L."/>
            <person name="Takai K."/>
            <person name="Horikoshi K."/>
        </authorList>
    </citation>
    <scope>NUCLEOTIDE SEQUENCE [LARGE SCALE GENOMIC DNA]</scope>
    <source>
        <strain>NBC37-1</strain>
    </source>
</reference>